<dbReference type="EC" id="2.1.3.15" evidence="1"/>
<dbReference type="EMBL" id="CP001097">
    <property type="protein sequence ID" value="ACD89496.1"/>
    <property type="molecule type" value="Genomic_DNA"/>
</dbReference>
<dbReference type="RefSeq" id="WP_012465377.1">
    <property type="nucleotide sequence ID" value="NC_010803.1"/>
</dbReference>
<dbReference type="SMR" id="B3EFW3"/>
<dbReference type="STRING" id="290315.Clim_0403"/>
<dbReference type="KEGG" id="cli:Clim_0403"/>
<dbReference type="eggNOG" id="COG0777">
    <property type="taxonomic scope" value="Bacteria"/>
</dbReference>
<dbReference type="HOGENOM" id="CLU_015486_1_0_10"/>
<dbReference type="OrthoDB" id="9772975at2"/>
<dbReference type="UniPathway" id="UPA00655">
    <property type="reaction ID" value="UER00711"/>
</dbReference>
<dbReference type="Proteomes" id="UP000008841">
    <property type="component" value="Chromosome"/>
</dbReference>
<dbReference type="GO" id="GO:0009317">
    <property type="term" value="C:acetyl-CoA carboxylase complex"/>
    <property type="evidence" value="ECO:0007669"/>
    <property type="project" value="InterPro"/>
</dbReference>
<dbReference type="GO" id="GO:0003989">
    <property type="term" value="F:acetyl-CoA carboxylase activity"/>
    <property type="evidence" value="ECO:0007669"/>
    <property type="project" value="InterPro"/>
</dbReference>
<dbReference type="GO" id="GO:0005524">
    <property type="term" value="F:ATP binding"/>
    <property type="evidence" value="ECO:0007669"/>
    <property type="project" value="UniProtKB-KW"/>
</dbReference>
<dbReference type="GO" id="GO:0016743">
    <property type="term" value="F:carboxyl- or carbamoyltransferase activity"/>
    <property type="evidence" value="ECO:0007669"/>
    <property type="project" value="UniProtKB-UniRule"/>
</dbReference>
<dbReference type="GO" id="GO:0008270">
    <property type="term" value="F:zinc ion binding"/>
    <property type="evidence" value="ECO:0007669"/>
    <property type="project" value="UniProtKB-UniRule"/>
</dbReference>
<dbReference type="GO" id="GO:0006633">
    <property type="term" value="P:fatty acid biosynthetic process"/>
    <property type="evidence" value="ECO:0007669"/>
    <property type="project" value="UniProtKB-KW"/>
</dbReference>
<dbReference type="GO" id="GO:2001295">
    <property type="term" value="P:malonyl-CoA biosynthetic process"/>
    <property type="evidence" value="ECO:0007669"/>
    <property type="project" value="UniProtKB-UniRule"/>
</dbReference>
<dbReference type="Gene3D" id="3.90.226.10">
    <property type="entry name" value="2-enoyl-CoA Hydratase, Chain A, domain 1"/>
    <property type="match status" value="1"/>
</dbReference>
<dbReference type="HAMAP" id="MF_01395">
    <property type="entry name" value="AcetylCoA_CT_beta"/>
    <property type="match status" value="1"/>
</dbReference>
<dbReference type="InterPro" id="IPR034733">
    <property type="entry name" value="AcCoA_carboxyl_beta"/>
</dbReference>
<dbReference type="InterPro" id="IPR000438">
    <property type="entry name" value="Acetyl_CoA_COase_Trfase_b_su"/>
</dbReference>
<dbReference type="InterPro" id="IPR029045">
    <property type="entry name" value="ClpP/crotonase-like_dom_sf"/>
</dbReference>
<dbReference type="InterPro" id="IPR011762">
    <property type="entry name" value="COA_CT_N"/>
</dbReference>
<dbReference type="InterPro" id="IPR041010">
    <property type="entry name" value="Znf-ACC"/>
</dbReference>
<dbReference type="NCBIfam" id="TIGR00515">
    <property type="entry name" value="accD"/>
    <property type="match status" value="1"/>
</dbReference>
<dbReference type="PANTHER" id="PTHR42995">
    <property type="entry name" value="ACETYL-COENZYME A CARBOXYLASE CARBOXYL TRANSFERASE SUBUNIT BETA, CHLOROPLASTIC"/>
    <property type="match status" value="1"/>
</dbReference>
<dbReference type="PANTHER" id="PTHR42995:SF5">
    <property type="entry name" value="ACETYL-COENZYME A CARBOXYLASE CARBOXYL TRANSFERASE SUBUNIT BETA, CHLOROPLASTIC"/>
    <property type="match status" value="1"/>
</dbReference>
<dbReference type="Pfam" id="PF01039">
    <property type="entry name" value="Carboxyl_trans"/>
    <property type="match status" value="1"/>
</dbReference>
<dbReference type="Pfam" id="PF17848">
    <property type="entry name" value="Zn_ribbon_ACC"/>
    <property type="match status" value="1"/>
</dbReference>
<dbReference type="PRINTS" id="PR01070">
    <property type="entry name" value="ACCCTRFRASEB"/>
</dbReference>
<dbReference type="SUPFAM" id="SSF52096">
    <property type="entry name" value="ClpP/crotonase"/>
    <property type="match status" value="1"/>
</dbReference>
<dbReference type="PROSITE" id="PS50980">
    <property type="entry name" value="COA_CT_NTER"/>
    <property type="match status" value="1"/>
</dbReference>
<protein>
    <recommendedName>
        <fullName evidence="1">Acetyl-coenzyme A carboxylase carboxyl transferase subunit beta</fullName>
        <shortName evidence="1">ACCase subunit beta</shortName>
        <shortName evidence="1">Acetyl-CoA carboxylase carboxyltransferase subunit beta</shortName>
        <ecNumber evidence="1">2.1.3.15</ecNumber>
    </recommendedName>
</protein>
<reference key="1">
    <citation type="submission" date="2008-05" db="EMBL/GenBank/DDBJ databases">
        <title>Complete sequence of Chlorobium limicola DSM 245.</title>
        <authorList>
            <consortium name="US DOE Joint Genome Institute"/>
            <person name="Lucas S."/>
            <person name="Copeland A."/>
            <person name="Lapidus A."/>
            <person name="Glavina del Rio T."/>
            <person name="Dalin E."/>
            <person name="Tice H."/>
            <person name="Bruce D."/>
            <person name="Goodwin L."/>
            <person name="Pitluck S."/>
            <person name="Schmutz J."/>
            <person name="Larimer F."/>
            <person name="Land M."/>
            <person name="Hauser L."/>
            <person name="Kyrpides N."/>
            <person name="Ovchinnikova G."/>
            <person name="Zhao F."/>
            <person name="Li T."/>
            <person name="Liu Z."/>
            <person name="Overmann J."/>
            <person name="Bryant D.A."/>
            <person name="Richardson P."/>
        </authorList>
    </citation>
    <scope>NUCLEOTIDE SEQUENCE [LARGE SCALE GENOMIC DNA]</scope>
    <source>
        <strain>DSM 245 / NBRC 103803 / 6330</strain>
    </source>
</reference>
<evidence type="ECO:0000255" key="1">
    <source>
        <dbReference type="HAMAP-Rule" id="MF_01395"/>
    </source>
</evidence>
<evidence type="ECO:0000255" key="2">
    <source>
        <dbReference type="PROSITE-ProRule" id="PRU01136"/>
    </source>
</evidence>
<sequence length="279" mass="31122">MVWFKRVKPSIRTTDKRDVPEGLWWKCEECGAMIHKKQLEDHVYTCSDCGYHFRISPYRYFSILFDNDTYQEFDDALRAGDPLGFTDTKKYSDRVHDTIGKSGKTEACRNAWGEVGGNPLVVSAMDFGFIGGSMGSVVGEKISRAVDKAVELNAPLLVISQSGGARMMEGAFSLMQMAKTSARLTLLSEKRLPFFSLMTDPTMGGITASFAMLGDVNLSEPKALIGFAGPRVIRDTIKRDLPEGFQRAEFLHEQGFVDCIVHRKELKSQIVRLAGMLKV</sequence>
<accession>B3EFW3</accession>
<organism>
    <name type="scientific">Chlorobium limicola (strain DSM 245 / NBRC 103803 / 6330)</name>
    <dbReference type="NCBI Taxonomy" id="290315"/>
    <lineage>
        <taxon>Bacteria</taxon>
        <taxon>Pseudomonadati</taxon>
        <taxon>Chlorobiota</taxon>
        <taxon>Chlorobiia</taxon>
        <taxon>Chlorobiales</taxon>
        <taxon>Chlorobiaceae</taxon>
        <taxon>Chlorobium/Pelodictyon group</taxon>
        <taxon>Chlorobium</taxon>
    </lineage>
</organism>
<gene>
    <name evidence="1" type="primary">accD</name>
    <name type="ordered locus">Clim_0403</name>
</gene>
<comment type="function">
    <text evidence="1">Component of the acetyl coenzyme A carboxylase (ACC) complex. Biotin carboxylase (BC) catalyzes the carboxylation of biotin on its carrier protein (BCCP) and then the CO(2) group is transferred by the transcarboxylase to acetyl-CoA to form malonyl-CoA.</text>
</comment>
<comment type="catalytic activity">
    <reaction evidence="1">
        <text>N(6)-carboxybiotinyl-L-lysyl-[protein] + acetyl-CoA = N(6)-biotinyl-L-lysyl-[protein] + malonyl-CoA</text>
        <dbReference type="Rhea" id="RHEA:54728"/>
        <dbReference type="Rhea" id="RHEA-COMP:10505"/>
        <dbReference type="Rhea" id="RHEA-COMP:10506"/>
        <dbReference type="ChEBI" id="CHEBI:57288"/>
        <dbReference type="ChEBI" id="CHEBI:57384"/>
        <dbReference type="ChEBI" id="CHEBI:83144"/>
        <dbReference type="ChEBI" id="CHEBI:83145"/>
        <dbReference type="EC" id="2.1.3.15"/>
    </reaction>
</comment>
<comment type="cofactor">
    <cofactor evidence="1">
        <name>Zn(2+)</name>
        <dbReference type="ChEBI" id="CHEBI:29105"/>
    </cofactor>
    <text evidence="1">Binds 1 zinc ion per subunit.</text>
</comment>
<comment type="pathway">
    <text evidence="1">Lipid metabolism; malonyl-CoA biosynthesis; malonyl-CoA from acetyl-CoA: step 1/1.</text>
</comment>
<comment type="subunit">
    <text evidence="1">Acetyl-CoA carboxylase is a heterohexamer composed of biotin carboxyl carrier protein (AccB), biotin carboxylase (AccC) and two subunits each of ACCase subunit alpha (AccA) and ACCase subunit beta (AccD).</text>
</comment>
<comment type="subcellular location">
    <subcellularLocation>
        <location evidence="1">Cytoplasm</location>
    </subcellularLocation>
</comment>
<comment type="similarity">
    <text evidence="1">Belongs to the AccD/PCCB family.</text>
</comment>
<proteinExistence type="inferred from homology"/>
<keyword id="KW-0067">ATP-binding</keyword>
<keyword id="KW-0963">Cytoplasm</keyword>
<keyword id="KW-0275">Fatty acid biosynthesis</keyword>
<keyword id="KW-0276">Fatty acid metabolism</keyword>
<keyword id="KW-0444">Lipid biosynthesis</keyword>
<keyword id="KW-0443">Lipid metabolism</keyword>
<keyword id="KW-0479">Metal-binding</keyword>
<keyword id="KW-0547">Nucleotide-binding</keyword>
<keyword id="KW-0808">Transferase</keyword>
<keyword id="KW-0862">Zinc</keyword>
<keyword id="KW-0863">Zinc-finger</keyword>
<name>ACCD_CHLL2</name>
<feature type="chain" id="PRO_0000389715" description="Acetyl-coenzyme A carboxylase carboxyl transferase subunit beta">
    <location>
        <begin position="1"/>
        <end position="279"/>
    </location>
</feature>
<feature type="domain" description="CoA carboxyltransferase N-terminal" evidence="2">
    <location>
        <begin position="23"/>
        <end position="279"/>
    </location>
</feature>
<feature type="zinc finger region" description="C4-type" evidence="1">
    <location>
        <begin position="27"/>
        <end position="49"/>
    </location>
</feature>
<feature type="binding site" evidence="1">
    <location>
        <position position="27"/>
    </location>
    <ligand>
        <name>Zn(2+)</name>
        <dbReference type="ChEBI" id="CHEBI:29105"/>
    </ligand>
</feature>
<feature type="binding site" evidence="1">
    <location>
        <position position="30"/>
    </location>
    <ligand>
        <name>Zn(2+)</name>
        <dbReference type="ChEBI" id="CHEBI:29105"/>
    </ligand>
</feature>
<feature type="binding site" evidence="1">
    <location>
        <position position="46"/>
    </location>
    <ligand>
        <name>Zn(2+)</name>
        <dbReference type="ChEBI" id="CHEBI:29105"/>
    </ligand>
</feature>
<feature type="binding site" evidence="1">
    <location>
        <position position="49"/>
    </location>
    <ligand>
        <name>Zn(2+)</name>
        <dbReference type="ChEBI" id="CHEBI:29105"/>
    </ligand>
</feature>